<evidence type="ECO:0000250" key="1"/>
<evidence type="ECO:0000255" key="2"/>
<evidence type="ECO:0000305" key="3"/>
<proteinExistence type="evidence at transcript level"/>
<reference key="1">
    <citation type="journal article" date="2002" name="Nature">
        <title>The genome sequence and structure of rice chromosome 1.</title>
        <authorList>
            <person name="Sasaki T."/>
            <person name="Matsumoto T."/>
            <person name="Yamamoto K."/>
            <person name="Sakata K."/>
            <person name="Baba T."/>
            <person name="Katayose Y."/>
            <person name="Wu J."/>
            <person name="Niimura Y."/>
            <person name="Cheng Z."/>
            <person name="Nagamura Y."/>
            <person name="Antonio B.A."/>
            <person name="Kanamori H."/>
            <person name="Hosokawa S."/>
            <person name="Masukawa M."/>
            <person name="Arikawa K."/>
            <person name="Chiden Y."/>
            <person name="Hayashi M."/>
            <person name="Okamoto M."/>
            <person name="Ando T."/>
            <person name="Aoki H."/>
            <person name="Arita K."/>
            <person name="Hamada M."/>
            <person name="Harada C."/>
            <person name="Hijishita S."/>
            <person name="Honda M."/>
            <person name="Ichikawa Y."/>
            <person name="Idonuma A."/>
            <person name="Iijima M."/>
            <person name="Ikeda M."/>
            <person name="Ikeno M."/>
            <person name="Ito S."/>
            <person name="Ito T."/>
            <person name="Ito Y."/>
            <person name="Ito Y."/>
            <person name="Iwabuchi A."/>
            <person name="Kamiya K."/>
            <person name="Karasawa W."/>
            <person name="Katagiri S."/>
            <person name="Kikuta A."/>
            <person name="Kobayashi N."/>
            <person name="Kono I."/>
            <person name="Machita K."/>
            <person name="Maehara T."/>
            <person name="Mizuno H."/>
            <person name="Mizubayashi T."/>
            <person name="Mukai Y."/>
            <person name="Nagasaki H."/>
            <person name="Nakashima M."/>
            <person name="Nakama Y."/>
            <person name="Nakamichi Y."/>
            <person name="Nakamura M."/>
            <person name="Namiki N."/>
            <person name="Negishi M."/>
            <person name="Ohta I."/>
            <person name="Ono N."/>
            <person name="Saji S."/>
            <person name="Sakai K."/>
            <person name="Shibata M."/>
            <person name="Shimokawa T."/>
            <person name="Shomura A."/>
            <person name="Song J."/>
            <person name="Takazaki Y."/>
            <person name="Terasawa K."/>
            <person name="Tsuji K."/>
            <person name="Waki K."/>
            <person name="Yamagata H."/>
            <person name="Yamane H."/>
            <person name="Yoshiki S."/>
            <person name="Yoshihara R."/>
            <person name="Yukawa K."/>
            <person name="Zhong H."/>
            <person name="Iwama H."/>
            <person name="Endo T."/>
            <person name="Ito H."/>
            <person name="Hahn J.H."/>
            <person name="Kim H.-I."/>
            <person name="Eun M.-Y."/>
            <person name="Yano M."/>
            <person name="Jiang J."/>
            <person name="Gojobori T."/>
        </authorList>
    </citation>
    <scope>NUCLEOTIDE SEQUENCE [LARGE SCALE GENOMIC DNA]</scope>
    <source>
        <strain>cv. Nipponbare</strain>
    </source>
</reference>
<reference key="2">
    <citation type="journal article" date="2005" name="Nature">
        <title>The map-based sequence of the rice genome.</title>
        <authorList>
            <consortium name="International rice genome sequencing project (IRGSP)"/>
        </authorList>
    </citation>
    <scope>NUCLEOTIDE SEQUENCE [LARGE SCALE GENOMIC DNA]</scope>
    <source>
        <strain>cv. Nipponbare</strain>
    </source>
</reference>
<reference key="3">
    <citation type="journal article" date="2008" name="Nucleic Acids Res.">
        <title>The rice annotation project database (RAP-DB): 2008 update.</title>
        <authorList>
            <consortium name="The rice annotation project (RAP)"/>
        </authorList>
    </citation>
    <scope>GENOME REANNOTATION</scope>
    <source>
        <strain>cv. Nipponbare</strain>
    </source>
</reference>
<reference key="4">
    <citation type="journal article" date="2013" name="Rice">
        <title>Improvement of the Oryza sativa Nipponbare reference genome using next generation sequence and optical map data.</title>
        <authorList>
            <person name="Kawahara Y."/>
            <person name="de la Bastide M."/>
            <person name="Hamilton J.P."/>
            <person name="Kanamori H."/>
            <person name="McCombie W.R."/>
            <person name="Ouyang S."/>
            <person name="Schwartz D.C."/>
            <person name="Tanaka T."/>
            <person name="Wu J."/>
            <person name="Zhou S."/>
            <person name="Childs K.L."/>
            <person name="Davidson R.M."/>
            <person name="Lin H."/>
            <person name="Quesada-Ocampo L."/>
            <person name="Vaillancourt B."/>
            <person name="Sakai H."/>
            <person name="Lee S.S."/>
            <person name="Kim J."/>
            <person name="Numa H."/>
            <person name="Itoh T."/>
            <person name="Buell C.R."/>
            <person name="Matsumoto T."/>
        </authorList>
    </citation>
    <scope>GENOME REANNOTATION</scope>
    <source>
        <strain>cv. Nipponbare</strain>
    </source>
</reference>
<reference key="5">
    <citation type="journal article" date="2005" name="PLoS Biol.">
        <title>The genomes of Oryza sativa: a history of duplications.</title>
        <authorList>
            <person name="Yu J."/>
            <person name="Wang J."/>
            <person name="Lin W."/>
            <person name="Li S."/>
            <person name="Li H."/>
            <person name="Zhou J."/>
            <person name="Ni P."/>
            <person name="Dong W."/>
            <person name="Hu S."/>
            <person name="Zeng C."/>
            <person name="Zhang J."/>
            <person name="Zhang Y."/>
            <person name="Li R."/>
            <person name="Xu Z."/>
            <person name="Li S."/>
            <person name="Li X."/>
            <person name="Zheng H."/>
            <person name="Cong L."/>
            <person name="Lin L."/>
            <person name="Yin J."/>
            <person name="Geng J."/>
            <person name="Li G."/>
            <person name="Shi J."/>
            <person name="Liu J."/>
            <person name="Lv H."/>
            <person name="Li J."/>
            <person name="Wang J."/>
            <person name="Deng Y."/>
            <person name="Ran L."/>
            <person name="Shi X."/>
            <person name="Wang X."/>
            <person name="Wu Q."/>
            <person name="Li C."/>
            <person name="Ren X."/>
            <person name="Wang J."/>
            <person name="Wang X."/>
            <person name="Li D."/>
            <person name="Liu D."/>
            <person name="Zhang X."/>
            <person name="Ji Z."/>
            <person name="Zhao W."/>
            <person name="Sun Y."/>
            <person name="Zhang Z."/>
            <person name="Bao J."/>
            <person name="Han Y."/>
            <person name="Dong L."/>
            <person name="Ji J."/>
            <person name="Chen P."/>
            <person name="Wu S."/>
            <person name="Liu J."/>
            <person name="Xiao Y."/>
            <person name="Bu D."/>
            <person name="Tan J."/>
            <person name="Yang L."/>
            <person name="Ye C."/>
            <person name="Zhang J."/>
            <person name="Xu J."/>
            <person name="Zhou Y."/>
            <person name="Yu Y."/>
            <person name="Zhang B."/>
            <person name="Zhuang S."/>
            <person name="Wei H."/>
            <person name="Liu B."/>
            <person name="Lei M."/>
            <person name="Yu H."/>
            <person name="Li Y."/>
            <person name="Xu H."/>
            <person name="Wei S."/>
            <person name="He X."/>
            <person name="Fang L."/>
            <person name="Zhang Z."/>
            <person name="Zhang Y."/>
            <person name="Huang X."/>
            <person name="Su Z."/>
            <person name="Tong W."/>
            <person name="Li J."/>
            <person name="Tong Z."/>
            <person name="Li S."/>
            <person name="Ye J."/>
            <person name="Wang L."/>
            <person name="Fang L."/>
            <person name="Lei T."/>
            <person name="Chen C.-S."/>
            <person name="Chen H.-C."/>
            <person name="Xu Z."/>
            <person name="Li H."/>
            <person name="Huang H."/>
            <person name="Zhang F."/>
            <person name="Xu H."/>
            <person name="Li N."/>
            <person name="Zhao C."/>
            <person name="Li S."/>
            <person name="Dong L."/>
            <person name="Huang Y."/>
            <person name="Li L."/>
            <person name="Xi Y."/>
            <person name="Qi Q."/>
            <person name="Li W."/>
            <person name="Zhang B."/>
            <person name="Hu W."/>
            <person name="Zhang Y."/>
            <person name="Tian X."/>
            <person name="Jiao Y."/>
            <person name="Liang X."/>
            <person name="Jin J."/>
            <person name="Gao L."/>
            <person name="Zheng W."/>
            <person name="Hao B."/>
            <person name="Liu S.-M."/>
            <person name="Wang W."/>
            <person name="Yuan L."/>
            <person name="Cao M."/>
            <person name="McDermott J."/>
            <person name="Samudrala R."/>
            <person name="Wang J."/>
            <person name="Wong G.K.-S."/>
            <person name="Yang H."/>
        </authorList>
    </citation>
    <scope>NUCLEOTIDE SEQUENCE [LARGE SCALE GENOMIC DNA]</scope>
    <source>
        <strain>cv. Nipponbare</strain>
    </source>
</reference>
<reference key="6">
    <citation type="journal article" date="2007" name="Plant Mol. Biol.">
        <title>Elicitor induced activation of the methylerythritol phosphate pathway toward phytoalexins biosynthesis in rice.</title>
        <authorList>
            <person name="Okada A."/>
            <person name="Shimizu T."/>
            <person name="Okada K."/>
            <person name="Kuzuyama T."/>
            <person name="Koga J."/>
            <person name="Shibuya N."/>
            <person name="Nojiri H."/>
            <person name="Yamane H."/>
        </authorList>
    </citation>
    <scope>NUCLEOTIDE SEQUENCE [MRNA] OF 92-297</scope>
</reference>
<dbReference type="EC" id="2.7.7.60"/>
<dbReference type="EMBL" id="AP003346">
    <property type="protein sequence ID" value="BAD82130.1"/>
    <property type="molecule type" value="Genomic_DNA"/>
</dbReference>
<dbReference type="EMBL" id="AP003379">
    <property type="protein sequence ID" value="BAD82245.1"/>
    <property type="molecule type" value="Genomic_DNA"/>
</dbReference>
<dbReference type="EMBL" id="AP008207">
    <property type="protein sequence ID" value="BAH91416.1"/>
    <property type="status" value="ALT_SEQ"/>
    <property type="molecule type" value="Genomic_DNA"/>
</dbReference>
<dbReference type="EMBL" id="AP014957">
    <property type="status" value="NOT_ANNOTATED_CDS"/>
    <property type="molecule type" value="Genomic_DNA"/>
</dbReference>
<dbReference type="EMBL" id="CM000138">
    <property type="protein sequence ID" value="EAZ14419.1"/>
    <property type="molecule type" value="Genomic_DNA"/>
</dbReference>
<dbReference type="EMBL" id="AB296384">
    <property type="protein sequence ID" value="BAF52631.1"/>
    <property type="molecule type" value="mRNA"/>
</dbReference>
<dbReference type="RefSeq" id="XP_015625415.1">
    <property type="nucleotide sequence ID" value="XM_015769929.1"/>
</dbReference>
<dbReference type="RefSeq" id="XP_015626188.1">
    <property type="nucleotide sequence ID" value="XM_015770702.1"/>
</dbReference>
<dbReference type="SMR" id="Q5N8G1"/>
<dbReference type="FunCoup" id="Q5N8G1">
    <property type="interactions" value="531"/>
</dbReference>
<dbReference type="STRING" id="39947.Q5N8G1"/>
<dbReference type="PaxDb" id="39947-Q5N8G1"/>
<dbReference type="KEGG" id="dosa:Os01g0887000"/>
<dbReference type="eggNOG" id="ENOG502QUUE">
    <property type="taxonomic scope" value="Eukaryota"/>
</dbReference>
<dbReference type="HOGENOM" id="CLU_061281_0_0_1"/>
<dbReference type="InParanoid" id="Q5N8G1"/>
<dbReference type="OrthoDB" id="414267at2759"/>
<dbReference type="PlantReactome" id="R-OSA-1119464">
    <property type="pathway name" value="Methylerythritol phosphate pathway"/>
</dbReference>
<dbReference type="UniPathway" id="UPA00056">
    <property type="reaction ID" value="UER00093"/>
</dbReference>
<dbReference type="Proteomes" id="UP000000763">
    <property type="component" value="Chromosome 1"/>
</dbReference>
<dbReference type="Proteomes" id="UP000007752">
    <property type="component" value="Chromosome 1"/>
</dbReference>
<dbReference type="Proteomes" id="UP000059680">
    <property type="component" value="Chromosome 1"/>
</dbReference>
<dbReference type="GO" id="GO:0009570">
    <property type="term" value="C:chloroplast stroma"/>
    <property type="evidence" value="ECO:0007669"/>
    <property type="project" value="UniProtKB-SubCell"/>
</dbReference>
<dbReference type="GO" id="GO:0050518">
    <property type="term" value="F:2-C-methyl-D-erythritol 4-phosphate cytidylyltransferase activity"/>
    <property type="evidence" value="ECO:0000318"/>
    <property type="project" value="GO_Central"/>
</dbReference>
<dbReference type="GO" id="GO:0019288">
    <property type="term" value="P:isopentenyl diphosphate biosynthetic process, methylerythritol 4-phosphate pathway"/>
    <property type="evidence" value="ECO:0007669"/>
    <property type="project" value="UniProtKB-UniPathway"/>
</dbReference>
<dbReference type="CDD" id="cd02516">
    <property type="entry name" value="CDP-ME_synthetase"/>
    <property type="match status" value="1"/>
</dbReference>
<dbReference type="FunFam" id="3.90.550.10:FF:000003">
    <property type="entry name" value="2-C-methyl-D-erythritol 4-phosphate cytidylyltransferase"/>
    <property type="match status" value="1"/>
</dbReference>
<dbReference type="Gene3D" id="3.90.550.10">
    <property type="entry name" value="Spore Coat Polysaccharide Biosynthesis Protein SpsA, Chain A"/>
    <property type="match status" value="1"/>
</dbReference>
<dbReference type="HAMAP" id="MF_00108">
    <property type="entry name" value="IspD"/>
    <property type="match status" value="1"/>
</dbReference>
<dbReference type="InterPro" id="IPR001228">
    <property type="entry name" value="IspD"/>
</dbReference>
<dbReference type="InterPro" id="IPR034683">
    <property type="entry name" value="IspD/TarI"/>
</dbReference>
<dbReference type="InterPro" id="IPR050088">
    <property type="entry name" value="IspD/TarI_cytidylyltransf_bact"/>
</dbReference>
<dbReference type="InterPro" id="IPR018294">
    <property type="entry name" value="ISPD_synthase_CS"/>
</dbReference>
<dbReference type="InterPro" id="IPR029044">
    <property type="entry name" value="Nucleotide-diphossugar_trans"/>
</dbReference>
<dbReference type="NCBIfam" id="TIGR00453">
    <property type="entry name" value="ispD"/>
    <property type="match status" value="1"/>
</dbReference>
<dbReference type="PANTHER" id="PTHR32125">
    <property type="entry name" value="2-C-METHYL-D-ERYTHRITOL 4-PHOSPHATE CYTIDYLYLTRANSFERASE, CHLOROPLASTIC"/>
    <property type="match status" value="1"/>
</dbReference>
<dbReference type="PANTHER" id="PTHR32125:SF4">
    <property type="entry name" value="2-C-METHYL-D-ERYTHRITOL 4-PHOSPHATE CYTIDYLYLTRANSFERASE, CHLOROPLASTIC"/>
    <property type="match status" value="1"/>
</dbReference>
<dbReference type="Pfam" id="PF01128">
    <property type="entry name" value="IspD"/>
    <property type="match status" value="1"/>
</dbReference>
<dbReference type="SUPFAM" id="SSF53448">
    <property type="entry name" value="Nucleotide-diphospho-sugar transferases"/>
    <property type="match status" value="1"/>
</dbReference>
<dbReference type="PROSITE" id="PS01295">
    <property type="entry name" value="ISPD"/>
    <property type="match status" value="1"/>
</dbReference>
<keyword id="KW-0150">Chloroplast</keyword>
<keyword id="KW-0414">Isoprene biosynthesis</keyword>
<keyword id="KW-0548">Nucleotidyltransferase</keyword>
<keyword id="KW-0934">Plastid</keyword>
<keyword id="KW-1185">Reference proteome</keyword>
<keyword id="KW-0808">Transferase</keyword>
<keyword id="KW-0809">Transit peptide</keyword>
<protein>
    <recommendedName>
        <fullName>2-C-methyl-D-erythritol 4-phosphate cytidylyltransferase, chloroplastic</fullName>
        <ecNumber>2.7.7.60</ecNumber>
    </recommendedName>
    <alternativeName>
        <fullName>4-diphosphocytidyl-2C-methyl-D-erythritol synthase</fullName>
        <shortName>OsCMS</shortName>
    </alternativeName>
    <alternativeName>
        <fullName>MEP cytidylyltransferase</fullName>
    </alternativeName>
</protein>
<comment type="function">
    <text evidence="1">Enzyme of the plastid non-mevalonate pathway for isoprenoid biosynthesis that catalyzes the formation of 4-diphosphocytidyl-2-C-methyl-D-erythritol from CTP and 2-C-methyl-D-erythritol 4-phosphate (MEP). Is essential for chloroplast development (By similarity).</text>
</comment>
<comment type="catalytic activity">
    <reaction>
        <text>2-C-methyl-D-erythritol 4-phosphate + CTP + H(+) = 4-CDP-2-C-methyl-D-erythritol + diphosphate</text>
        <dbReference type="Rhea" id="RHEA:13429"/>
        <dbReference type="ChEBI" id="CHEBI:15378"/>
        <dbReference type="ChEBI" id="CHEBI:33019"/>
        <dbReference type="ChEBI" id="CHEBI:37563"/>
        <dbReference type="ChEBI" id="CHEBI:57823"/>
        <dbReference type="ChEBI" id="CHEBI:58262"/>
        <dbReference type="EC" id="2.7.7.60"/>
    </reaction>
</comment>
<comment type="cofactor">
    <cofactor evidence="1">
        <name>a divalent metal cation</name>
        <dbReference type="ChEBI" id="CHEBI:60240"/>
    </cofactor>
</comment>
<comment type="pathway">
    <text>Isoprenoid biosynthesis; isopentenyl diphosphate biosynthesis via DXP pathway; isopentenyl diphosphate from 1-deoxy-D-xylulose 5-phosphate: step 2/6.</text>
</comment>
<comment type="subcellular location">
    <subcellularLocation>
        <location evidence="1">Plastid</location>
        <location evidence="1">Chloroplast stroma</location>
    </subcellularLocation>
</comment>
<comment type="similarity">
    <text evidence="3">Belongs to the IspD/TarI cytidylyltransferase family. IspD subfamily.</text>
</comment>
<comment type="sequence caution" evidence="3">
    <conflict type="erroneous gene model prediction">
        <sequence resource="EMBL-CDS" id="BAH91416"/>
    </conflict>
</comment>
<name>ISPD_ORYSJ</name>
<accession>Q5N8G1</accession>
<accession>A4PIB9</accession>
<accession>C7IXL0</accession>
<sequence length="297" mass="32464">MELRLCLRLHAPPASAPTTHPPPPLSPSPNLALRRLRTGGSCAVAPRRHARKWGSAVCAAKADGAQGEAVKERSVSVVLLSGGQGKRMGASMPKQYLPLLGLPIALHSLKTFCQLKEVKEVVVVCDPDYKDIFEGSIENVQIPIKFALPGKERQDSVYNGLQEIDGDSELVCVHDSARPLVSSEDVKKVLEDAIVHGAAVLGVPVKATIKEADSNSFVVKTLDRKTLWEMQTPQVMRPSLLRDGFELVKRDGLEVTDDVSIVEYLKHSVYITEGSYTNIKVTTPDDLLLAERLMNEK</sequence>
<feature type="transit peptide" description="Chloroplast" evidence="2">
    <location>
        <begin position="1"/>
        <end position="57"/>
    </location>
</feature>
<feature type="chain" id="PRO_0000417595" description="2-C-methyl-D-erythritol 4-phosphate cytidylyltransferase, chloroplastic">
    <location>
        <begin position="58"/>
        <end position="297"/>
    </location>
</feature>
<feature type="site" description="Transition state stabilizer" evidence="1">
    <location>
        <position position="87"/>
    </location>
</feature>
<feature type="site" description="Transition state stabilizer" evidence="1">
    <location>
        <position position="94"/>
    </location>
</feature>
<feature type="site" description="Positions MEP for the nucleophilic attack" evidence="1">
    <location>
        <position position="224"/>
    </location>
</feature>
<feature type="site" description="Positions MEP for the nucleophilic attack" evidence="1">
    <location>
        <position position="280"/>
    </location>
</feature>
<gene>
    <name type="primary">ISPD</name>
    <name type="synonym">CMS</name>
    <name type="ordered locus">Os01g0887000</name>
    <name type="ordered locus">LOC_Os01g66360</name>
    <name type="ORF">OsJ_04342</name>
    <name type="ORF">P0408G07.39</name>
    <name type="ORF">P0434C04.18</name>
</gene>
<organism>
    <name type="scientific">Oryza sativa subsp. japonica</name>
    <name type="common">Rice</name>
    <dbReference type="NCBI Taxonomy" id="39947"/>
    <lineage>
        <taxon>Eukaryota</taxon>
        <taxon>Viridiplantae</taxon>
        <taxon>Streptophyta</taxon>
        <taxon>Embryophyta</taxon>
        <taxon>Tracheophyta</taxon>
        <taxon>Spermatophyta</taxon>
        <taxon>Magnoliopsida</taxon>
        <taxon>Liliopsida</taxon>
        <taxon>Poales</taxon>
        <taxon>Poaceae</taxon>
        <taxon>BOP clade</taxon>
        <taxon>Oryzoideae</taxon>
        <taxon>Oryzeae</taxon>
        <taxon>Oryzinae</taxon>
        <taxon>Oryza</taxon>
        <taxon>Oryza sativa</taxon>
    </lineage>
</organism>